<gene>
    <name evidence="8" type="primary">HDG4</name>
    <name evidence="7" type="synonym">HDGL2-4</name>
    <name evidence="10" type="ordered locus">At4g17710</name>
    <name evidence="11" type="ORF">dl4890c</name>
    <name evidence="12" type="ORF">FCAALL.102</name>
</gene>
<sequence>METKDKKEKGHMVLNSDNVFGSVSSSPTTTIQNPNYFTSFENPNFPYIFPKEEYEVMSKIESGSGKSTGSGHDPVENTAIEQEPPAAKKKRYHRHTASQIQQMEALFKENAHPDTKTRLRLSKKLGLSPIQVKFWFQNKRTQIKAQQSRSDNAKLKAENETLKTESQNIQSNFQCLFCSTCGHNLRLENARLRQELDRLRSIVSMRNPSPSQEITPETNKNNNDNMLIAEEEKAIDMELAVSCARELAKMCDINEPLWNKKRLDNESVCLNEEEYKKMFLWPLMNDDDRFRREASRANAVIMLNCITLVKAFLDADKWSEMFFPIVSSAKTAQIISSGASGPSGTLLLMFAELQVVSPLVPTREAYFLRYVEQNAEEGKWMVVDFPIDRIKPASATTTDQYRRKPSGCIIQAMRNGYSQVTWVEHVEVEEKHVQDEVVREFVESGVAFGAERWLSVLKRQCERMASLMATNITDLGVIPSVEARKNLMKLSQRMVKTFCLNIINSHGQAPTKDTVKIVSRKVCGGLVPCAVSVTLLPYSHQQVFDLLRDNQRLSQLEILFMGSSFQEVAHIANGSHLGNSISLLRINVESNSSHNVELMLQETCTDNSGSLLVYSTVDPVAVQLAMNGEDPSEIPLLPVGFSVVPVNPSDGVEGSSVSSPSCLLTVAIQVLGSNVTTERLDLSTVSVINHRICATVNRITSALVNDVGN</sequence>
<feature type="chain" id="PRO_0000331666" description="Homeobox-leucine zipper protein HDG4">
    <location>
        <begin position="1"/>
        <end position="709"/>
    </location>
</feature>
<feature type="domain" description="START" evidence="4">
    <location>
        <begin position="229"/>
        <end position="466"/>
    </location>
</feature>
<feature type="DNA-binding region" description="Homeobox" evidence="3">
    <location>
        <begin position="88"/>
        <end position="147"/>
    </location>
</feature>
<feature type="region of interest" description="Disordered" evidence="5">
    <location>
        <begin position="61"/>
        <end position="92"/>
    </location>
</feature>
<feature type="coiled-coil region" evidence="2">
    <location>
        <begin position="137"/>
        <end position="205"/>
    </location>
</feature>
<keyword id="KW-0175">Coiled coil</keyword>
<keyword id="KW-0238">DNA-binding</keyword>
<keyword id="KW-0371">Homeobox</keyword>
<keyword id="KW-0539">Nucleus</keyword>
<keyword id="KW-1185">Reference proteome</keyword>
<keyword id="KW-0804">Transcription</keyword>
<keyword id="KW-0805">Transcription regulation</keyword>
<protein>
    <recommendedName>
        <fullName evidence="8">Homeobox-leucine zipper protein HDG4</fullName>
    </recommendedName>
    <alternativeName>
        <fullName evidence="8">HD-ZIP protein HDG4</fullName>
    </alternativeName>
    <alternativeName>
        <fullName evidence="7">Homeodomain GLABRA 2-like protein 4</fullName>
    </alternativeName>
    <alternativeName>
        <fullName evidence="8">Homeodomain transcription factor HDG4</fullName>
    </alternativeName>
    <alternativeName>
        <fullName evidence="8">Protein HOMEODOMAIN GLABROUS 4</fullName>
    </alternativeName>
</protein>
<organism>
    <name type="scientific">Arabidopsis thaliana</name>
    <name type="common">Mouse-ear cress</name>
    <dbReference type="NCBI Taxonomy" id="3702"/>
    <lineage>
        <taxon>Eukaryota</taxon>
        <taxon>Viridiplantae</taxon>
        <taxon>Streptophyta</taxon>
        <taxon>Embryophyta</taxon>
        <taxon>Tracheophyta</taxon>
        <taxon>Spermatophyta</taxon>
        <taxon>Magnoliopsida</taxon>
        <taxon>eudicotyledons</taxon>
        <taxon>Gunneridae</taxon>
        <taxon>Pentapetalae</taxon>
        <taxon>rosids</taxon>
        <taxon>malvids</taxon>
        <taxon>Brassicales</taxon>
        <taxon>Brassicaceae</taxon>
        <taxon>Camelineae</taxon>
        <taxon>Arabidopsis</taxon>
    </lineage>
</organism>
<comment type="function">
    <text evidence="1">Probable transcription factor.</text>
</comment>
<comment type="interaction">
    <interactant intactId="EBI-4450571">
        <id>Q8L7H4</id>
    </interactant>
    <interactant intactId="EBI-4443010">
        <id>Q9FX31</id>
        <label>HDG11</label>
    </interactant>
    <organismsDiffer>false</organismsDiffer>
    <experiments>2</experiments>
</comment>
<comment type="subcellular location">
    <subcellularLocation>
        <location evidence="9">Nucleus</location>
    </subcellularLocation>
</comment>
<comment type="tissue specificity">
    <text evidence="6">Expressed in flowers.</text>
</comment>
<comment type="similarity">
    <text evidence="9">Belongs to the HD-ZIP homeobox family. Class IV subfamily.</text>
</comment>
<name>HDG4_ARATH</name>
<accession>Q8L7H4</accession>
<accession>O23611</accession>
<evidence type="ECO:0000250" key="1"/>
<evidence type="ECO:0000255" key="2"/>
<evidence type="ECO:0000255" key="3">
    <source>
        <dbReference type="PROSITE-ProRule" id="PRU00108"/>
    </source>
</evidence>
<evidence type="ECO:0000255" key="4">
    <source>
        <dbReference type="PROSITE-ProRule" id="PRU00197"/>
    </source>
</evidence>
<evidence type="ECO:0000256" key="5">
    <source>
        <dbReference type="SAM" id="MobiDB-lite"/>
    </source>
</evidence>
<evidence type="ECO:0000269" key="6">
    <source>
    </source>
</evidence>
<evidence type="ECO:0000303" key="7">
    <source>
    </source>
</evidence>
<evidence type="ECO:0000303" key="8">
    <source>
    </source>
</evidence>
<evidence type="ECO:0000305" key="9"/>
<evidence type="ECO:0000312" key="10">
    <source>
        <dbReference type="Araport" id="AT4G17710"/>
    </source>
</evidence>
<evidence type="ECO:0000312" key="11">
    <source>
        <dbReference type="EMBL" id="CAB10551.1"/>
    </source>
</evidence>
<evidence type="ECO:0000312" key="12">
    <source>
        <dbReference type="EMBL" id="CAB78774.1"/>
    </source>
</evidence>
<reference key="1">
    <citation type="journal article" date="1998" name="Nature">
        <title>Analysis of 1.9 Mb of contiguous sequence from chromosome 4 of Arabidopsis thaliana.</title>
        <authorList>
            <person name="Bevan M."/>
            <person name="Bancroft I."/>
            <person name="Bent E."/>
            <person name="Love K."/>
            <person name="Goodman H.M."/>
            <person name="Dean C."/>
            <person name="Bergkamp R."/>
            <person name="Dirkse W."/>
            <person name="van Staveren M."/>
            <person name="Stiekema W."/>
            <person name="Drost L."/>
            <person name="Ridley P."/>
            <person name="Hudson S.-A."/>
            <person name="Patel K."/>
            <person name="Murphy G."/>
            <person name="Piffanelli P."/>
            <person name="Wedler H."/>
            <person name="Wedler E."/>
            <person name="Wambutt R."/>
            <person name="Weitzenegger T."/>
            <person name="Pohl T."/>
            <person name="Terryn N."/>
            <person name="Gielen J."/>
            <person name="Villarroel R."/>
            <person name="De Clercq R."/>
            <person name="van Montagu M."/>
            <person name="Lecharny A."/>
            <person name="Aubourg S."/>
            <person name="Gy I."/>
            <person name="Kreis M."/>
            <person name="Lao N."/>
            <person name="Kavanagh T."/>
            <person name="Hempel S."/>
            <person name="Kotter P."/>
            <person name="Entian K.-D."/>
            <person name="Rieger M."/>
            <person name="Schaefer M."/>
            <person name="Funk B."/>
            <person name="Mueller-Auer S."/>
            <person name="Silvey M."/>
            <person name="James R."/>
            <person name="Monfort A."/>
            <person name="Pons A."/>
            <person name="Puigdomenech P."/>
            <person name="Douka A."/>
            <person name="Voukelatou E."/>
            <person name="Milioni D."/>
            <person name="Hatzopoulos P."/>
            <person name="Piravandi E."/>
            <person name="Obermaier B."/>
            <person name="Hilbert H."/>
            <person name="Duesterhoeft A."/>
            <person name="Moores T."/>
            <person name="Jones J.D.G."/>
            <person name="Eneva T."/>
            <person name="Palme K."/>
            <person name="Benes V."/>
            <person name="Rechmann S."/>
            <person name="Ansorge W."/>
            <person name="Cooke R."/>
            <person name="Berger C."/>
            <person name="Delseny M."/>
            <person name="Voet M."/>
            <person name="Volckaert G."/>
            <person name="Mewes H.-W."/>
            <person name="Klosterman S."/>
            <person name="Schueller C."/>
            <person name="Chalwatzis N."/>
        </authorList>
    </citation>
    <scope>NUCLEOTIDE SEQUENCE [LARGE SCALE GENOMIC DNA]</scope>
    <source>
        <strain>cv. Columbia</strain>
    </source>
</reference>
<reference key="2">
    <citation type="journal article" date="1999" name="Nature">
        <title>Sequence and analysis of chromosome 4 of the plant Arabidopsis thaliana.</title>
        <authorList>
            <person name="Mayer K.F.X."/>
            <person name="Schueller C."/>
            <person name="Wambutt R."/>
            <person name="Murphy G."/>
            <person name="Volckaert G."/>
            <person name="Pohl T."/>
            <person name="Duesterhoeft A."/>
            <person name="Stiekema W."/>
            <person name="Entian K.-D."/>
            <person name="Terryn N."/>
            <person name="Harris B."/>
            <person name="Ansorge W."/>
            <person name="Brandt P."/>
            <person name="Grivell L.A."/>
            <person name="Rieger M."/>
            <person name="Weichselgartner M."/>
            <person name="de Simone V."/>
            <person name="Obermaier B."/>
            <person name="Mache R."/>
            <person name="Mueller M."/>
            <person name="Kreis M."/>
            <person name="Delseny M."/>
            <person name="Puigdomenech P."/>
            <person name="Watson M."/>
            <person name="Schmidtheini T."/>
            <person name="Reichert B."/>
            <person name="Portetelle D."/>
            <person name="Perez-Alonso M."/>
            <person name="Boutry M."/>
            <person name="Bancroft I."/>
            <person name="Vos P."/>
            <person name="Hoheisel J."/>
            <person name="Zimmermann W."/>
            <person name="Wedler H."/>
            <person name="Ridley P."/>
            <person name="Langham S.-A."/>
            <person name="McCullagh B."/>
            <person name="Bilham L."/>
            <person name="Robben J."/>
            <person name="van der Schueren J."/>
            <person name="Grymonprez B."/>
            <person name="Chuang Y.-J."/>
            <person name="Vandenbussche F."/>
            <person name="Braeken M."/>
            <person name="Weltjens I."/>
            <person name="Voet M."/>
            <person name="Bastiaens I."/>
            <person name="Aert R."/>
            <person name="Defoor E."/>
            <person name="Weitzenegger T."/>
            <person name="Bothe G."/>
            <person name="Ramsperger U."/>
            <person name="Hilbert H."/>
            <person name="Braun M."/>
            <person name="Holzer E."/>
            <person name="Brandt A."/>
            <person name="Peters S."/>
            <person name="van Staveren M."/>
            <person name="Dirkse W."/>
            <person name="Mooijman P."/>
            <person name="Klein Lankhorst R."/>
            <person name="Rose M."/>
            <person name="Hauf J."/>
            <person name="Koetter P."/>
            <person name="Berneiser S."/>
            <person name="Hempel S."/>
            <person name="Feldpausch M."/>
            <person name="Lamberth S."/>
            <person name="Van den Daele H."/>
            <person name="De Keyser A."/>
            <person name="Buysshaert C."/>
            <person name="Gielen J."/>
            <person name="Villarroel R."/>
            <person name="De Clercq R."/>
            <person name="van Montagu M."/>
            <person name="Rogers J."/>
            <person name="Cronin A."/>
            <person name="Quail M.A."/>
            <person name="Bray-Allen S."/>
            <person name="Clark L."/>
            <person name="Doggett J."/>
            <person name="Hall S."/>
            <person name="Kay M."/>
            <person name="Lennard N."/>
            <person name="McLay K."/>
            <person name="Mayes R."/>
            <person name="Pettett A."/>
            <person name="Rajandream M.A."/>
            <person name="Lyne M."/>
            <person name="Benes V."/>
            <person name="Rechmann S."/>
            <person name="Borkova D."/>
            <person name="Bloecker H."/>
            <person name="Scharfe M."/>
            <person name="Grimm M."/>
            <person name="Loehnert T.-H."/>
            <person name="Dose S."/>
            <person name="de Haan M."/>
            <person name="Maarse A.C."/>
            <person name="Schaefer M."/>
            <person name="Mueller-Auer S."/>
            <person name="Gabel C."/>
            <person name="Fuchs M."/>
            <person name="Fartmann B."/>
            <person name="Granderath K."/>
            <person name="Dauner D."/>
            <person name="Herzl A."/>
            <person name="Neumann S."/>
            <person name="Argiriou A."/>
            <person name="Vitale D."/>
            <person name="Liguori R."/>
            <person name="Piravandi E."/>
            <person name="Massenet O."/>
            <person name="Quigley F."/>
            <person name="Clabauld G."/>
            <person name="Muendlein A."/>
            <person name="Felber R."/>
            <person name="Schnabl S."/>
            <person name="Hiller R."/>
            <person name="Schmidt W."/>
            <person name="Lecharny A."/>
            <person name="Aubourg S."/>
            <person name="Chefdor F."/>
            <person name="Cooke R."/>
            <person name="Berger C."/>
            <person name="Monfort A."/>
            <person name="Casacuberta E."/>
            <person name="Gibbons T."/>
            <person name="Weber N."/>
            <person name="Vandenbol M."/>
            <person name="Bargues M."/>
            <person name="Terol J."/>
            <person name="Torres A."/>
            <person name="Perez-Perez A."/>
            <person name="Purnelle B."/>
            <person name="Bent E."/>
            <person name="Johnson S."/>
            <person name="Tacon D."/>
            <person name="Jesse T."/>
            <person name="Heijnen L."/>
            <person name="Schwarz S."/>
            <person name="Scholler P."/>
            <person name="Heber S."/>
            <person name="Francs P."/>
            <person name="Bielke C."/>
            <person name="Frishman D."/>
            <person name="Haase D."/>
            <person name="Lemcke K."/>
            <person name="Mewes H.-W."/>
            <person name="Stocker S."/>
            <person name="Zaccaria P."/>
            <person name="Bevan M."/>
            <person name="Wilson R.K."/>
            <person name="de la Bastide M."/>
            <person name="Habermann K."/>
            <person name="Parnell L."/>
            <person name="Dedhia N."/>
            <person name="Gnoj L."/>
            <person name="Schutz K."/>
            <person name="Huang E."/>
            <person name="Spiegel L."/>
            <person name="Sekhon M."/>
            <person name="Murray J."/>
            <person name="Sheet P."/>
            <person name="Cordes M."/>
            <person name="Abu-Threideh J."/>
            <person name="Stoneking T."/>
            <person name="Kalicki J."/>
            <person name="Graves T."/>
            <person name="Harmon G."/>
            <person name="Edwards J."/>
            <person name="Latreille P."/>
            <person name="Courtney L."/>
            <person name="Cloud J."/>
            <person name="Abbott A."/>
            <person name="Scott K."/>
            <person name="Johnson D."/>
            <person name="Minx P."/>
            <person name="Bentley D."/>
            <person name="Fulton B."/>
            <person name="Miller N."/>
            <person name="Greco T."/>
            <person name="Kemp K."/>
            <person name="Kramer J."/>
            <person name="Fulton L."/>
            <person name="Mardis E."/>
            <person name="Dante M."/>
            <person name="Pepin K."/>
            <person name="Hillier L.W."/>
            <person name="Nelson J."/>
            <person name="Spieth J."/>
            <person name="Ryan E."/>
            <person name="Andrews S."/>
            <person name="Geisel C."/>
            <person name="Layman D."/>
            <person name="Du H."/>
            <person name="Ali J."/>
            <person name="Berghoff A."/>
            <person name="Jones K."/>
            <person name="Drone K."/>
            <person name="Cotton M."/>
            <person name="Joshu C."/>
            <person name="Antonoiu B."/>
            <person name="Zidanic M."/>
            <person name="Strong C."/>
            <person name="Sun H."/>
            <person name="Lamar B."/>
            <person name="Yordan C."/>
            <person name="Ma P."/>
            <person name="Zhong J."/>
            <person name="Preston R."/>
            <person name="Vil D."/>
            <person name="Shekher M."/>
            <person name="Matero A."/>
            <person name="Shah R."/>
            <person name="Swaby I.K."/>
            <person name="O'Shaughnessy A."/>
            <person name="Rodriguez M."/>
            <person name="Hoffman J."/>
            <person name="Till S."/>
            <person name="Granat S."/>
            <person name="Shohdy N."/>
            <person name="Hasegawa A."/>
            <person name="Hameed A."/>
            <person name="Lodhi M."/>
            <person name="Johnson A."/>
            <person name="Chen E."/>
            <person name="Marra M.A."/>
            <person name="Martienssen R."/>
            <person name="McCombie W.R."/>
        </authorList>
    </citation>
    <scope>NUCLEOTIDE SEQUENCE [LARGE SCALE GENOMIC DNA]</scope>
    <source>
        <strain>cv. Columbia</strain>
    </source>
</reference>
<reference key="3">
    <citation type="journal article" date="2017" name="Plant J.">
        <title>Araport11: a complete reannotation of the Arabidopsis thaliana reference genome.</title>
        <authorList>
            <person name="Cheng C.Y."/>
            <person name="Krishnakumar V."/>
            <person name="Chan A.P."/>
            <person name="Thibaud-Nissen F."/>
            <person name="Schobel S."/>
            <person name="Town C.D."/>
        </authorList>
    </citation>
    <scope>GENOME REANNOTATION</scope>
    <source>
        <strain>cv. Columbia</strain>
    </source>
</reference>
<reference key="4">
    <citation type="journal article" date="2003" name="Science">
        <title>Empirical analysis of transcriptional activity in the Arabidopsis genome.</title>
        <authorList>
            <person name="Yamada K."/>
            <person name="Lim J."/>
            <person name="Dale J.M."/>
            <person name="Chen H."/>
            <person name="Shinn P."/>
            <person name="Palm C.J."/>
            <person name="Southwick A.M."/>
            <person name="Wu H.C."/>
            <person name="Kim C.J."/>
            <person name="Nguyen M."/>
            <person name="Pham P.K."/>
            <person name="Cheuk R.F."/>
            <person name="Karlin-Newmann G."/>
            <person name="Liu S.X."/>
            <person name="Lam B."/>
            <person name="Sakano H."/>
            <person name="Wu T."/>
            <person name="Yu G."/>
            <person name="Miranda M."/>
            <person name="Quach H.L."/>
            <person name="Tripp M."/>
            <person name="Chang C.H."/>
            <person name="Lee J.M."/>
            <person name="Toriumi M.J."/>
            <person name="Chan M.M."/>
            <person name="Tang C.C."/>
            <person name="Onodera C.S."/>
            <person name="Deng J.M."/>
            <person name="Akiyama K."/>
            <person name="Ansari Y."/>
            <person name="Arakawa T."/>
            <person name="Banh J."/>
            <person name="Banno F."/>
            <person name="Bowser L."/>
            <person name="Brooks S.Y."/>
            <person name="Carninci P."/>
            <person name="Chao Q."/>
            <person name="Choy N."/>
            <person name="Enju A."/>
            <person name="Goldsmith A.D."/>
            <person name="Gurjal M."/>
            <person name="Hansen N.F."/>
            <person name="Hayashizaki Y."/>
            <person name="Johnson-Hopson C."/>
            <person name="Hsuan V.W."/>
            <person name="Iida K."/>
            <person name="Karnes M."/>
            <person name="Khan S."/>
            <person name="Koesema E."/>
            <person name="Ishida J."/>
            <person name="Jiang P.X."/>
            <person name="Jones T."/>
            <person name="Kawai J."/>
            <person name="Kamiya A."/>
            <person name="Meyers C."/>
            <person name="Nakajima M."/>
            <person name="Narusaka M."/>
            <person name="Seki M."/>
            <person name="Sakurai T."/>
            <person name="Satou M."/>
            <person name="Tamse R."/>
            <person name="Vaysberg M."/>
            <person name="Wallender E.K."/>
            <person name="Wong C."/>
            <person name="Yamamura Y."/>
            <person name="Yuan S."/>
            <person name="Shinozaki K."/>
            <person name="Davis R.W."/>
            <person name="Theologis A."/>
            <person name="Ecker J.R."/>
        </authorList>
    </citation>
    <scope>NUCLEOTIDE SEQUENCE [LARGE SCALE MRNA]</scope>
    <source>
        <strain>cv. Columbia</strain>
    </source>
</reference>
<reference key="5">
    <citation type="journal article" date="2000" name="Plant Mol. Biol.">
        <title>Organization and structural evolution of four multigene families in Arabidopsis thaliana: AtLCAD, AtLGT, AtMYST and AtHD-GL2.</title>
        <authorList>
            <person name="Tavares R."/>
            <person name="Aubourg S."/>
            <person name="Lecharny A."/>
            <person name="Kreis M."/>
        </authorList>
    </citation>
    <scope>GENE FAMILY</scope>
</reference>
<reference key="6">
    <citation type="journal article" date="2006" name="Plant Physiol.">
        <title>Characterization of the class IV homeodomain-leucine zipper gene family in Arabidopsis.</title>
        <authorList>
            <person name="Nakamura M."/>
            <person name="Katsumata H."/>
            <person name="Abe M."/>
            <person name="Yabe N."/>
            <person name="Komeda Y."/>
            <person name="Yamamoto K.T."/>
            <person name="Takahashi T."/>
        </authorList>
    </citation>
    <scope>TISSUE SPECIFICITY</scope>
    <scope>GENE FAMILY</scope>
    <scope>NOMENCLATURE</scope>
</reference>
<dbReference type="EMBL" id="Z97344">
    <property type="protein sequence ID" value="CAB10551.1"/>
    <property type="molecule type" value="Genomic_DNA"/>
</dbReference>
<dbReference type="EMBL" id="AL161547">
    <property type="protein sequence ID" value="CAB78774.1"/>
    <property type="molecule type" value="Genomic_DNA"/>
</dbReference>
<dbReference type="EMBL" id="CP002687">
    <property type="protein sequence ID" value="AEE83937.1"/>
    <property type="molecule type" value="Genomic_DNA"/>
</dbReference>
<dbReference type="EMBL" id="AY133700">
    <property type="protein sequence ID" value="AAM91634.1"/>
    <property type="molecule type" value="mRNA"/>
</dbReference>
<dbReference type="PIR" id="B71447">
    <property type="entry name" value="B71447"/>
</dbReference>
<dbReference type="RefSeq" id="NP_193506.2">
    <property type="nucleotide sequence ID" value="NM_117880.3"/>
</dbReference>
<dbReference type="SMR" id="Q8L7H4"/>
<dbReference type="BioGRID" id="12785">
    <property type="interactions" value="3"/>
</dbReference>
<dbReference type="FunCoup" id="Q8L7H4">
    <property type="interactions" value="1"/>
</dbReference>
<dbReference type="IntAct" id="Q8L7H4">
    <property type="interactions" value="3"/>
</dbReference>
<dbReference type="STRING" id="3702.Q8L7H4"/>
<dbReference type="PaxDb" id="3702-AT4G17710.1"/>
<dbReference type="ProteomicsDB" id="230376"/>
<dbReference type="EnsemblPlants" id="AT4G17710.1">
    <property type="protein sequence ID" value="AT4G17710.1"/>
    <property type="gene ID" value="AT4G17710"/>
</dbReference>
<dbReference type="GeneID" id="827492"/>
<dbReference type="Gramene" id="AT4G17710.1">
    <property type="protein sequence ID" value="AT4G17710.1"/>
    <property type="gene ID" value="AT4G17710"/>
</dbReference>
<dbReference type="KEGG" id="ath:AT4G17710"/>
<dbReference type="Araport" id="AT4G17710"/>
<dbReference type="TAIR" id="AT4G17710">
    <property type="gene designation" value="HDG4"/>
</dbReference>
<dbReference type="eggNOG" id="ENOG502QU3P">
    <property type="taxonomic scope" value="Eukaryota"/>
</dbReference>
<dbReference type="HOGENOM" id="CLU_015002_2_1_1"/>
<dbReference type="InParanoid" id="Q8L7H4"/>
<dbReference type="OMA" id="MEEMFNE"/>
<dbReference type="PhylomeDB" id="Q8L7H4"/>
<dbReference type="PRO" id="PR:Q8L7H4"/>
<dbReference type="Proteomes" id="UP000006548">
    <property type="component" value="Chromosome 4"/>
</dbReference>
<dbReference type="ExpressionAtlas" id="Q8L7H4">
    <property type="expression patterns" value="baseline and differential"/>
</dbReference>
<dbReference type="GO" id="GO:0005634">
    <property type="term" value="C:nucleus"/>
    <property type="evidence" value="ECO:0007669"/>
    <property type="project" value="UniProtKB-SubCell"/>
</dbReference>
<dbReference type="GO" id="GO:0003677">
    <property type="term" value="F:DNA binding"/>
    <property type="evidence" value="ECO:0007669"/>
    <property type="project" value="UniProtKB-KW"/>
</dbReference>
<dbReference type="GO" id="GO:0003700">
    <property type="term" value="F:DNA-binding transcription factor activity"/>
    <property type="evidence" value="ECO:0000250"/>
    <property type="project" value="TAIR"/>
</dbReference>
<dbReference type="GO" id="GO:0000981">
    <property type="term" value="F:DNA-binding transcription factor activity, RNA polymerase II-specific"/>
    <property type="evidence" value="ECO:0007669"/>
    <property type="project" value="InterPro"/>
</dbReference>
<dbReference type="GO" id="GO:0008289">
    <property type="term" value="F:lipid binding"/>
    <property type="evidence" value="ECO:0007669"/>
    <property type="project" value="InterPro"/>
</dbReference>
<dbReference type="CDD" id="cd00086">
    <property type="entry name" value="homeodomain"/>
    <property type="match status" value="1"/>
</dbReference>
<dbReference type="CDD" id="cd08875">
    <property type="entry name" value="START_ArGLABRA2_like"/>
    <property type="match status" value="1"/>
</dbReference>
<dbReference type="FunFam" id="1.10.10.60:FF:000229">
    <property type="entry name" value="Homeobox-leucine zipper protein HDG1"/>
    <property type="match status" value="1"/>
</dbReference>
<dbReference type="Gene3D" id="1.10.10.60">
    <property type="entry name" value="Homeodomain-like"/>
    <property type="match status" value="1"/>
</dbReference>
<dbReference type="InterPro" id="IPR042160">
    <property type="entry name" value="GLABRA2/ANL2/PDF2/ATML1-like"/>
</dbReference>
<dbReference type="InterPro" id="IPR001356">
    <property type="entry name" value="HD"/>
</dbReference>
<dbReference type="InterPro" id="IPR017970">
    <property type="entry name" value="Homeobox_CS"/>
</dbReference>
<dbReference type="InterPro" id="IPR009057">
    <property type="entry name" value="Homeodomain-like_sf"/>
</dbReference>
<dbReference type="InterPro" id="IPR002913">
    <property type="entry name" value="START_lipid-bd_dom"/>
</dbReference>
<dbReference type="PANTHER" id="PTHR45654:SF44">
    <property type="entry name" value="HOMEOBOX-LEUCINE ZIPPER PROTEIN HDG4"/>
    <property type="match status" value="1"/>
</dbReference>
<dbReference type="PANTHER" id="PTHR45654">
    <property type="entry name" value="HOMEOBOX-LEUCINE ZIPPER PROTEIN MERISTEM L1"/>
    <property type="match status" value="1"/>
</dbReference>
<dbReference type="Pfam" id="PF00046">
    <property type="entry name" value="Homeodomain"/>
    <property type="match status" value="1"/>
</dbReference>
<dbReference type="Pfam" id="PF01852">
    <property type="entry name" value="START"/>
    <property type="match status" value="1"/>
</dbReference>
<dbReference type="SMART" id="SM00389">
    <property type="entry name" value="HOX"/>
    <property type="match status" value="1"/>
</dbReference>
<dbReference type="SMART" id="SM00234">
    <property type="entry name" value="START"/>
    <property type="match status" value="1"/>
</dbReference>
<dbReference type="SUPFAM" id="SSF55961">
    <property type="entry name" value="Bet v1-like"/>
    <property type="match status" value="2"/>
</dbReference>
<dbReference type="SUPFAM" id="SSF46689">
    <property type="entry name" value="Homeodomain-like"/>
    <property type="match status" value="1"/>
</dbReference>
<dbReference type="PROSITE" id="PS00027">
    <property type="entry name" value="HOMEOBOX_1"/>
    <property type="match status" value="1"/>
</dbReference>
<dbReference type="PROSITE" id="PS50071">
    <property type="entry name" value="HOMEOBOX_2"/>
    <property type="match status" value="1"/>
</dbReference>
<dbReference type="PROSITE" id="PS50848">
    <property type="entry name" value="START"/>
    <property type="match status" value="1"/>
</dbReference>
<proteinExistence type="evidence at protein level"/>